<sequence length="136" mass="15231">MRKSTMDAEPTSSPPAGQWSIYLVRTAAGLLYTGISTDPIRRLRQHQSGKGSRALRGKGPLVLVWQQTVGNKGAALRLEYRLKQQSKAFKERLVQEPDRWADWSQPWLTVVTPPLEAPQKRPLQAVAKEGSDNREG</sequence>
<feature type="chain" id="PRO_0000328906" description="UPF0213 protein ASA_0550">
    <location>
        <begin position="1"/>
        <end position="136"/>
    </location>
</feature>
<feature type="domain" description="GIY-YIG" evidence="1">
    <location>
        <begin position="17"/>
        <end position="92"/>
    </location>
</feature>
<reference key="1">
    <citation type="journal article" date="2008" name="BMC Genomics">
        <title>The genome of Aeromonas salmonicida subsp. salmonicida A449: insights into the evolution of a fish pathogen.</title>
        <authorList>
            <person name="Reith M.E."/>
            <person name="Singh R.K."/>
            <person name="Curtis B."/>
            <person name="Boyd J.M."/>
            <person name="Bouevitch A."/>
            <person name="Kimball J."/>
            <person name="Munholland J."/>
            <person name="Murphy C."/>
            <person name="Sarty D."/>
            <person name="Williams J."/>
            <person name="Nash J.H."/>
            <person name="Johnson S.C."/>
            <person name="Brown L.L."/>
        </authorList>
    </citation>
    <scope>NUCLEOTIDE SEQUENCE [LARGE SCALE GENOMIC DNA]</scope>
    <source>
        <strain>A449</strain>
    </source>
</reference>
<dbReference type="EMBL" id="CP000644">
    <property type="protein sequence ID" value="ABO88716.1"/>
    <property type="molecule type" value="Genomic_DNA"/>
</dbReference>
<dbReference type="RefSeq" id="WP_011898319.1">
    <property type="nucleotide sequence ID" value="NC_009348.1"/>
</dbReference>
<dbReference type="SMR" id="A4SIJ4"/>
<dbReference type="STRING" id="29491.GCA_000820065_01949"/>
<dbReference type="KEGG" id="asa:ASA_0550"/>
<dbReference type="PATRIC" id="fig|382245.13.peg.555"/>
<dbReference type="eggNOG" id="COG2827">
    <property type="taxonomic scope" value="Bacteria"/>
</dbReference>
<dbReference type="HOGENOM" id="CLU_157737_0_0_6"/>
<dbReference type="Proteomes" id="UP000000225">
    <property type="component" value="Chromosome"/>
</dbReference>
<dbReference type="CDD" id="cd10456">
    <property type="entry name" value="GIY-YIG_UPF0213"/>
    <property type="match status" value="1"/>
</dbReference>
<dbReference type="Gene3D" id="3.40.1440.10">
    <property type="entry name" value="GIY-YIG endonuclease"/>
    <property type="match status" value="1"/>
</dbReference>
<dbReference type="HAMAP" id="MF_01029">
    <property type="entry name" value="UPF0213"/>
    <property type="match status" value="1"/>
</dbReference>
<dbReference type="InterPro" id="IPR000305">
    <property type="entry name" value="GIY-YIG_endonuc"/>
</dbReference>
<dbReference type="InterPro" id="IPR035901">
    <property type="entry name" value="GIY-YIG_endonuc_sf"/>
</dbReference>
<dbReference type="InterPro" id="IPR050190">
    <property type="entry name" value="UPF0213_domain"/>
</dbReference>
<dbReference type="InterPro" id="IPR022992">
    <property type="entry name" value="UPF0213_GIY-YIG_endonuc"/>
</dbReference>
<dbReference type="PANTHER" id="PTHR34477">
    <property type="entry name" value="UPF0213 PROTEIN YHBQ"/>
    <property type="match status" value="1"/>
</dbReference>
<dbReference type="PANTHER" id="PTHR34477:SF1">
    <property type="entry name" value="UPF0213 PROTEIN YHBQ"/>
    <property type="match status" value="1"/>
</dbReference>
<dbReference type="Pfam" id="PF01541">
    <property type="entry name" value="GIY-YIG"/>
    <property type="match status" value="1"/>
</dbReference>
<dbReference type="SUPFAM" id="SSF82771">
    <property type="entry name" value="GIY-YIG endonuclease"/>
    <property type="match status" value="1"/>
</dbReference>
<dbReference type="PROSITE" id="PS50164">
    <property type="entry name" value="GIY_YIG"/>
    <property type="match status" value="1"/>
</dbReference>
<proteinExistence type="inferred from homology"/>
<name>Y550_AERS4</name>
<accession>A4SIJ4</accession>
<protein>
    <recommendedName>
        <fullName evidence="1">UPF0213 protein ASA_0550</fullName>
    </recommendedName>
</protein>
<evidence type="ECO:0000255" key="1">
    <source>
        <dbReference type="HAMAP-Rule" id="MF_01029"/>
    </source>
</evidence>
<comment type="similarity">
    <text evidence="1">Belongs to the UPF0213 family.</text>
</comment>
<organism>
    <name type="scientific">Aeromonas salmonicida (strain A449)</name>
    <dbReference type="NCBI Taxonomy" id="382245"/>
    <lineage>
        <taxon>Bacteria</taxon>
        <taxon>Pseudomonadati</taxon>
        <taxon>Pseudomonadota</taxon>
        <taxon>Gammaproteobacteria</taxon>
        <taxon>Aeromonadales</taxon>
        <taxon>Aeromonadaceae</taxon>
        <taxon>Aeromonas</taxon>
    </lineage>
</organism>
<gene>
    <name type="ordered locus">ASA_0550</name>
</gene>